<sequence length="551" mass="62309">MKTKYIKQLFSAALIAVLSSGVTSCINDLDISPIDPQTGGSFDQQGVFVKGYAMLGVTGQKGIDGSPDLDGQDEGESGFYRTTFNCNELPTDECLWAWQENQDIPQLTSISWSPSSQRTEWVYVRLGYDITQYNFFLDQTEGMTDAETLRQRAEIRFLRALHYWYFLDLFGKAPFKEHFSNDLPVEKKGTELYTYIQNELNEIEADMYEPRQAPFGRADKAANWLLRARLYLNAGVYTGQTDYAKAEEYASKVIGSAYKLCTNYSELFMADNDENENAMQEIILPIRQDGVKTRNYGGSTYLVCGTRVAGMPRMGTTNGWSCIFARAAMVQKFFSNLEDVPMLPADVEIPTKGLDTDEQIDAFDAEHGIRTEDMIKAAGDDRALLYSGVGGGRRKIQTDAISGFTDGLSIVKWQNYRSDGKPVSHATYPDTDIPLFRLAEAYLTRAEAIFRQGGDATGDINELRKRANCTRKVQTVTEQELIDEWAREFYLEGRRRSDLVRFGMFTTNKYLWDWKGGAMNGTSVASYYNKYPIPVSDINNNRNMSQNEGYK</sequence>
<organism>
    <name type="scientific">Bacteroides thetaiotaomicron (strain ATCC 29148 / DSM 2079 / JCM 5827 / CCUG 10774 / NCTC 10582 / VPI-5482 / E50)</name>
    <dbReference type="NCBI Taxonomy" id="226186"/>
    <lineage>
        <taxon>Bacteria</taxon>
        <taxon>Pseudomonadati</taxon>
        <taxon>Bacteroidota</taxon>
        <taxon>Bacteroidia</taxon>
        <taxon>Bacteroidales</taxon>
        <taxon>Bacteroidaceae</taxon>
        <taxon>Bacteroides</taxon>
    </lineage>
</organism>
<proteinExistence type="evidence at protein level"/>
<dbReference type="EMBL" id="L77614">
    <property type="protein sequence ID" value="AAB42172.1"/>
    <property type="status" value="ALT_FRAME"/>
    <property type="molecule type" value="Genomic_DNA"/>
</dbReference>
<dbReference type="EMBL" id="AE015928">
    <property type="protein sequence ID" value="AAO78806.1"/>
    <property type="molecule type" value="Genomic_DNA"/>
</dbReference>
<dbReference type="RefSeq" id="NP_812612.1">
    <property type="nucleotide sequence ID" value="NC_004663.1"/>
</dbReference>
<dbReference type="RefSeq" id="WP_008767005.1">
    <property type="nucleotide sequence ID" value="NC_004663.1"/>
</dbReference>
<dbReference type="PDB" id="3CK7">
    <property type="method" value="X-ray"/>
    <property type="resolution" value="2.10 A"/>
    <property type="chains" value="A/B/C/D=26-551"/>
</dbReference>
<dbReference type="PDB" id="3CK8">
    <property type="method" value="X-ray"/>
    <property type="resolution" value="2.10 A"/>
    <property type="chains" value="A/B=26-551"/>
</dbReference>
<dbReference type="PDB" id="3CK9">
    <property type="method" value="X-ray"/>
    <property type="resolution" value="2.20 A"/>
    <property type="chains" value="A/B=26-551"/>
</dbReference>
<dbReference type="PDB" id="3CKB">
    <property type="method" value="X-ray"/>
    <property type="resolution" value="2.30 A"/>
    <property type="chains" value="A/B=26-551"/>
</dbReference>
<dbReference type="PDB" id="3CKC">
    <property type="method" value="X-ray"/>
    <property type="resolution" value="1.50 A"/>
    <property type="chains" value="A/B=26-551"/>
</dbReference>
<dbReference type="PDBsum" id="3CK7"/>
<dbReference type="PDBsum" id="3CK8"/>
<dbReference type="PDBsum" id="3CK9"/>
<dbReference type="PDBsum" id="3CKB"/>
<dbReference type="PDBsum" id="3CKC"/>
<dbReference type="SMR" id="Q8A1G2"/>
<dbReference type="DIP" id="DIP-46026N"/>
<dbReference type="STRING" id="226186.BT_3701"/>
<dbReference type="TCDB" id="8.A.46.1.1">
    <property type="family name" value="the glycan-binding protein (susd) family"/>
</dbReference>
<dbReference type="PaxDb" id="226186-BT_3701"/>
<dbReference type="EnsemblBacteria" id="AAO78806">
    <property type="protein sequence ID" value="AAO78806"/>
    <property type="gene ID" value="BT_3701"/>
</dbReference>
<dbReference type="GeneID" id="60924870"/>
<dbReference type="KEGG" id="bth:BT_3701"/>
<dbReference type="PATRIC" id="fig|226186.12.peg.3761"/>
<dbReference type="eggNOG" id="COG3637">
    <property type="taxonomic scope" value="Bacteria"/>
</dbReference>
<dbReference type="HOGENOM" id="CLU_015553_1_2_10"/>
<dbReference type="InParanoid" id="Q8A1G2"/>
<dbReference type="OrthoDB" id="5694214at2"/>
<dbReference type="UniPathway" id="UPA00153"/>
<dbReference type="EvolutionaryTrace" id="Q8A1G2"/>
<dbReference type="Proteomes" id="UP000001414">
    <property type="component" value="Chromosome"/>
</dbReference>
<dbReference type="GO" id="GO:0009279">
    <property type="term" value="C:cell outer membrane"/>
    <property type="evidence" value="ECO:0007669"/>
    <property type="project" value="UniProtKB-SubCell"/>
</dbReference>
<dbReference type="GO" id="GO:0019867">
    <property type="term" value="C:outer membrane"/>
    <property type="evidence" value="ECO:0000314"/>
    <property type="project" value="MENGO"/>
</dbReference>
<dbReference type="GO" id="GO:0005509">
    <property type="term" value="F:calcium ion binding"/>
    <property type="evidence" value="ECO:0000314"/>
    <property type="project" value="UniProtKB"/>
</dbReference>
<dbReference type="GO" id="GO:0042802">
    <property type="term" value="F:identical protein binding"/>
    <property type="evidence" value="ECO:0000353"/>
    <property type="project" value="IntAct"/>
</dbReference>
<dbReference type="GO" id="GO:2001070">
    <property type="term" value="F:starch binding"/>
    <property type="evidence" value="ECO:0000314"/>
    <property type="project" value="UniProtKB"/>
</dbReference>
<dbReference type="GO" id="GO:0005983">
    <property type="term" value="P:starch catabolic process"/>
    <property type="evidence" value="ECO:0007669"/>
    <property type="project" value="UniProtKB-UniPathway"/>
</dbReference>
<dbReference type="GO" id="GO:0005982">
    <property type="term" value="P:starch metabolic process"/>
    <property type="evidence" value="ECO:0000315"/>
    <property type="project" value="UniProtKB"/>
</dbReference>
<dbReference type="CDD" id="cd08977">
    <property type="entry name" value="SusD"/>
    <property type="match status" value="1"/>
</dbReference>
<dbReference type="Gene3D" id="1.25.40.390">
    <property type="match status" value="1"/>
</dbReference>
<dbReference type="Gene3D" id="1.10.3780.10">
    <property type="entry name" value="SusD-like"/>
    <property type="match status" value="1"/>
</dbReference>
<dbReference type="Gene3D" id="1.25.40.10">
    <property type="entry name" value="Tetratricopeptide repeat domain"/>
    <property type="match status" value="1"/>
</dbReference>
<dbReference type="InterPro" id="IPR012944">
    <property type="entry name" value="SusD_RagB_dom"/>
</dbReference>
<dbReference type="InterPro" id="IPR011990">
    <property type="entry name" value="TPR-like_helical_dom_sf"/>
</dbReference>
<dbReference type="NCBIfam" id="NF033071">
    <property type="entry name" value="SusD"/>
    <property type="match status" value="1"/>
</dbReference>
<dbReference type="Pfam" id="PF07980">
    <property type="entry name" value="SusD_RagB"/>
    <property type="match status" value="1"/>
</dbReference>
<dbReference type="SUPFAM" id="SSF48452">
    <property type="entry name" value="TPR-like"/>
    <property type="match status" value="1"/>
</dbReference>
<dbReference type="PROSITE" id="PS51257">
    <property type="entry name" value="PROKAR_LIPOPROTEIN"/>
    <property type="match status" value="1"/>
</dbReference>
<comment type="function">
    <text evidence="2 3 4 5">Major starch-binding protein present at the surface of the cell. Mediates starch-binding before starch transport in the periplasm for degradation.</text>
</comment>
<comment type="pathway">
    <text>Glycan degradation; starch degradation.</text>
</comment>
<comment type="subunit">
    <text evidence="3 4">Interacts with SusC.</text>
</comment>
<comment type="interaction">
    <interactant intactId="EBI-15714708">
        <id>Q8A1G2</id>
    </interactant>
    <interactant intactId="EBI-15714708">
        <id>Q8A1G2</id>
        <label>susD</label>
    </interactant>
    <organismsDiffer>false</organismsDiffer>
    <experiments>3</experiments>
</comment>
<comment type="subcellular location">
    <subcellularLocation>
        <location evidence="7 8">Cell outer membrane</location>
        <topology evidence="7 8">Lipid-anchor</topology>
    </subcellularLocation>
</comment>
<comment type="induction">
    <text evidence="5">By maltose.</text>
</comment>
<comment type="domain">
    <text evidence="4">The binding pocket contains an arc of aromatic residues that complements the natural helical structure of starch and imposes this conformation on bound maltoheptaose. Binds cyclic oligosaccharides with higher affinity than linear forms (PubMed:18611383).</text>
</comment>
<comment type="disruption phenotype">
    <text evidence="4">Abolished ability to grow on amylopectin and pullulan, as well as maltohexaose and maltoheptaose.</text>
</comment>
<comment type="similarity">
    <text evidence="6">Belongs to the SusD family.</text>
</comment>
<comment type="sequence caution" evidence="6">
    <conflict type="frameshift">
        <sequence resource="EMBL-CDS" id="AAB42172"/>
    </conflict>
</comment>
<evidence type="ECO:0000255" key="1">
    <source>
        <dbReference type="PROSITE-ProRule" id="PRU00303"/>
    </source>
</evidence>
<evidence type="ECO:0000269" key="2">
    <source>
    </source>
</evidence>
<evidence type="ECO:0000269" key="3">
    <source>
    </source>
</evidence>
<evidence type="ECO:0000269" key="4">
    <source>
    </source>
</evidence>
<evidence type="ECO:0000269" key="5">
    <source>
    </source>
</evidence>
<evidence type="ECO:0000305" key="6"/>
<evidence type="ECO:0000305" key="7">
    <source>
    </source>
</evidence>
<evidence type="ECO:0000305" key="8">
    <source>
    </source>
</evidence>
<evidence type="ECO:0007829" key="9">
    <source>
        <dbReference type="PDB" id="3CK7"/>
    </source>
</evidence>
<evidence type="ECO:0007829" key="10">
    <source>
        <dbReference type="PDB" id="3CK8"/>
    </source>
</evidence>
<evidence type="ECO:0007829" key="11">
    <source>
        <dbReference type="PDB" id="3CK9"/>
    </source>
</evidence>
<evidence type="ECO:0007829" key="12">
    <source>
        <dbReference type="PDB" id="3CKC"/>
    </source>
</evidence>
<name>SUSD_BACTN</name>
<feature type="signal peptide" evidence="1">
    <location>
        <begin position="1"/>
        <end position="24"/>
    </location>
</feature>
<feature type="chain" id="PRO_0000425883" description="Starch-binding protein SusD">
    <location>
        <begin position="25"/>
        <end position="551"/>
    </location>
</feature>
<feature type="binding site">
    <location>
        <begin position="73"/>
        <end position="75"/>
    </location>
    <ligand>
        <name>D-glucose</name>
        <dbReference type="ChEBI" id="CHEBI:4167"/>
    </ligand>
</feature>
<feature type="binding site">
    <location>
        <position position="81"/>
    </location>
    <ligand>
        <name>D-glucose</name>
        <dbReference type="ChEBI" id="CHEBI:4167"/>
    </ligand>
</feature>
<feature type="binding site">
    <location>
        <begin position="98"/>
        <end position="101"/>
    </location>
    <ligand>
        <name>D-glucose</name>
        <dbReference type="ChEBI" id="CHEBI:4167"/>
    </ligand>
</feature>
<feature type="binding site">
    <location>
        <position position="273"/>
    </location>
    <ligand>
        <name>Ca(2+)</name>
        <dbReference type="ChEBI" id="CHEBI:29108"/>
    </ligand>
</feature>
<feature type="binding site">
    <location>
        <position position="288"/>
    </location>
    <ligand>
        <name>Ca(2+)</name>
        <dbReference type="ChEBI" id="CHEBI:29108"/>
    </ligand>
</feature>
<feature type="binding site">
    <location>
        <position position="296"/>
    </location>
    <ligand>
        <name>D-glucose</name>
        <dbReference type="ChEBI" id="CHEBI:4167"/>
    </ligand>
</feature>
<feature type="binding site">
    <location>
        <position position="320"/>
    </location>
    <ligand>
        <name>D-glucose</name>
        <dbReference type="ChEBI" id="CHEBI:4167"/>
    </ligand>
</feature>
<feature type="binding site">
    <location>
        <position position="430"/>
    </location>
    <ligand>
        <name>Ca(2+)</name>
        <dbReference type="ChEBI" id="CHEBI:29108"/>
    </ligand>
</feature>
<feature type="binding site">
    <location>
        <position position="432"/>
    </location>
    <ligand>
        <name>Ca(2+)</name>
        <dbReference type="ChEBI" id="CHEBI:29108"/>
    </ligand>
</feature>
<feature type="lipid moiety-binding region" description="N-palmitoyl cysteine" evidence="1">
    <location>
        <position position="25"/>
    </location>
</feature>
<feature type="lipid moiety-binding region" description="S-diacylglycerol cysteine" evidence="1">
    <location>
        <position position="25"/>
    </location>
</feature>
<feature type="sequence conflict" description="In Ref. 1; AAB42172." evidence="6" ref="1">
    <original>V</original>
    <variation>A</variation>
    <location>
        <position position="423"/>
    </location>
</feature>
<feature type="sequence conflict" description="In Ref. 1; AAB42172." evidence="6" ref="1">
    <original>LI</original>
    <variation>TNR</variation>
    <location>
        <begin position="481"/>
        <end position="482"/>
    </location>
</feature>
<feature type="helix" evidence="10">
    <location>
        <begin position="39"/>
        <end position="41"/>
    </location>
</feature>
<feature type="helix" evidence="12">
    <location>
        <begin position="44"/>
        <end position="53"/>
    </location>
</feature>
<feature type="turn" evidence="12">
    <location>
        <begin position="54"/>
        <end position="56"/>
    </location>
</feature>
<feature type="turn" evidence="11">
    <location>
        <begin position="61"/>
        <end position="63"/>
    </location>
</feature>
<feature type="strand" evidence="11">
    <location>
        <begin position="64"/>
        <end position="66"/>
    </location>
</feature>
<feature type="turn" evidence="12">
    <location>
        <begin position="74"/>
        <end position="77"/>
    </location>
</feature>
<feature type="helix" evidence="12">
    <location>
        <begin position="79"/>
        <end position="88"/>
    </location>
</feature>
<feature type="strand" evidence="12">
    <location>
        <begin position="91"/>
        <end position="97"/>
    </location>
</feature>
<feature type="helix" evidence="12">
    <location>
        <begin position="104"/>
        <end position="109"/>
    </location>
</feature>
<feature type="helix" evidence="12">
    <location>
        <begin position="117"/>
        <end position="139"/>
    </location>
</feature>
<feature type="turn" evidence="9">
    <location>
        <begin position="140"/>
        <end position="142"/>
    </location>
</feature>
<feature type="helix" evidence="12">
    <location>
        <begin position="146"/>
        <end position="170"/>
    </location>
</feature>
<feature type="strand" evidence="12">
    <location>
        <begin position="171"/>
        <end position="175"/>
    </location>
</feature>
<feature type="strand" evidence="12">
    <location>
        <begin position="180"/>
        <end position="182"/>
    </location>
</feature>
<feature type="strand" evidence="12">
    <location>
        <begin position="185"/>
        <end position="188"/>
    </location>
</feature>
<feature type="helix" evidence="12">
    <location>
        <begin position="189"/>
        <end position="203"/>
    </location>
</feature>
<feature type="helix" evidence="12">
    <location>
        <begin position="204"/>
        <end position="206"/>
    </location>
</feature>
<feature type="turn" evidence="10">
    <location>
        <begin position="210"/>
        <end position="212"/>
    </location>
</feature>
<feature type="helix" evidence="12">
    <location>
        <begin position="220"/>
        <end position="232"/>
    </location>
</feature>
<feature type="helix" evidence="12">
    <location>
        <begin position="234"/>
        <end position="238"/>
    </location>
</feature>
<feature type="helix" evidence="12">
    <location>
        <begin position="243"/>
        <end position="254"/>
    </location>
</feature>
<feature type="helix" evidence="12">
    <location>
        <begin position="264"/>
        <end position="268"/>
    </location>
</feature>
<feature type="turn" evidence="12">
    <location>
        <begin position="270"/>
        <end position="274"/>
    </location>
</feature>
<feature type="helix" evidence="12">
    <location>
        <begin position="276"/>
        <end position="279"/>
    </location>
</feature>
<feature type="strand" evidence="12">
    <location>
        <begin position="282"/>
        <end position="286"/>
    </location>
</feature>
<feature type="helix" evidence="12">
    <location>
        <begin position="290"/>
        <end position="293"/>
    </location>
</feature>
<feature type="helix" evidence="12">
    <location>
        <begin position="294"/>
        <end position="296"/>
    </location>
</feature>
<feature type="helix" evidence="12">
    <location>
        <begin position="298"/>
        <end position="304"/>
    </location>
</feature>
<feature type="strand" evidence="12">
    <location>
        <begin position="315"/>
        <end position="317"/>
    </location>
</feature>
<feature type="strand" evidence="12">
    <location>
        <begin position="323"/>
        <end position="325"/>
    </location>
</feature>
<feature type="helix" evidence="12">
    <location>
        <begin position="327"/>
        <end position="330"/>
    </location>
</feature>
<feature type="turn" evidence="12">
    <location>
        <begin position="331"/>
        <end position="333"/>
    </location>
</feature>
<feature type="helix" evidence="12">
    <location>
        <begin position="337"/>
        <end position="339"/>
    </location>
</feature>
<feature type="strand" evidence="12">
    <location>
        <begin position="351"/>
        <end position="353"/>
    </location>
</feature>
<feature type="helix" evidence="12">
    <location>
        <begin position="357"/>
        <end position="366"/>
    </location>
</feature>
<feature type="helix" evidence="12">
    <location>
        <begin position="371"/>
        <end position="378"/>
    </location>
</feature>
<feature type="helix" evidence="12">
    <location>
        <begin position="404"/>
        <end position="406"/>
    </location>
</feature>
<feature type="strand" evidence="12">
    <location>
        <begin position="426"/>
        <end position="428"/>
    </location>
</feature>
<feature type="strand" evidence="12">
    <location>
        <begin position="433"/>
        <end position="437"/>
    </location>
</feature>
<feature type="helix" evidence="12">
    <location>
        <begin position="439"/>
        <end position="451"/>
    </location>
</feature>
<feature type="helix" evidence="12">
    <location>
        <begin position="457"/>
        <end position="466"/>
    </location>
</feature>
<feature type="helix" evidence="12">
    <location>
        <begin position="478"/>
        <end position="489"/>
    </location>
</feature>
<feature type="helix" evidence="12">
    <location>
        <begin position="495"/>
        <end position="501"/>
    </location>
</feature>
<feature type="strand" evidence="12">
    <location>
        <begin position="505"/>
        <end position="507"/>
    </location>
</feature>
<feature type="helix" evidence="12">
    <location>
        <begin position="515"/>
        <end position="517"/>
    </location>
</feature>
<feature type="helix" evidence="12">
    <location>
        <begin position="526"/>
        <end position="529"/>
    </location>
</feature>
<feature type="helix" evidence="12">
    <location>
        <begin position="535"/>
        <end position="540"/>
    </location>
</feature>
<protein>
    <recommendedName>
        <fullName>Starch-binding protein SusD</fullName>
    </recommendedName>
    <alternativeName>
        <fullName>Starch-utilization system protein D</fullName>
    </alternativeName>
</protein>
<reference key="1">
    <citation type="journal article" date="1997" name="J. Bacteriol.">
        <title>Characterization of four outer membrane proteins that play a role in utilization of starch by Bacteroides thetaiotaomicron.</title>
        <authorList>
            <person name="Reeves A.R."/>
            <person name="Wang G.R."/>
            <person name="Salyers A.A."/>
        </authorList>
    </citation>
    <scope>NUCLEOTIDE SEQUENCE [GENOMIC DNA]</scope>
    <scope>INDUCTION</scope>
    <scope>FUNCTION</scope>
    <scope>SUBCELLULAR LOCATION</scope>
    <source>
        <strain>ATCC 29148 / DSM 2079 / JCM 5827 / CCUG 10774 / NCTC 10582 / VPI-5482 / E50</strain>
    </source>
</reference>
<reference key="2">
    <citation type="journal article" date="2003" name="Science">
        <title>A genomic view of the human-Bacteroides thetaiotaomicron symbiosis.</title>
        <authorList>
            <person name="Xu J."/>
            <person name="Bjursell M.K."/>
            <person name="Himrod J."/>
            <person name="Deng S."/>
            <person name="Carmichael L.K."/>
            <person name="Chiang H.C."/>
            <person name="Hooper L.V."/>
            <person name="Gordon J.I."/>
        </authorList>
    </citation>
    <scope>NUCLEOTIDE SEQUENCE [LARGE SCALE GENOMIC DNA]</scope>
    <source>
        <strain>ATCC 29148 / DSM 2079 / JCM 5827 / CCUG 10774 / NCTC 10582 / VPI-5482 / E50</strain>
    </source>
</reference>
<reference key="3">
    <citation type="journal article" date="2000" name="J. Bacteriol.">
        <title>Characterization of four outer membrane proteins involved in binding starch to the cell surface of Bacteroides thetaiotaomicron.</title>
        <authorList>
            <person name="Shipman J.A."/>
            <person name="Berleman J.E."/>
            <person name="Salyers A.A."/>
        </authorList>
    </citation>
    <scope>FUNCTION</scope>
    <scope>STARCH-BINDING</scope>
    <scope>SUBCELLULAR LOCATION</scope>
    <source>
        <strain>ATCC 29148 / DSM 2079 / JCM 5827 / CCUG 10774 / NCTC 10582 / VPI-5482 / E50</strain>
    </source>
</reference>
<reference key="4">
    <citation type="journal article" date="2001" name="J. Bacteriol.">
        <title>Biochemical analysis of interactions between outer membrane proteins that contribute to starch utilization by Bacteroides thetaiotaomicron.</title>
        <authorList>
            <person name="Cho K.H."/>
            <person name="Salyers A.A."/>
        </authorList>
    </citation>
    <scope>FUNCTION</scope>
    <scope>INTERACTION WITH SUSC</scope>
    <source>
        <strain>ATCC 29148 / DSM 2079 / JCM 5827 / CCUG 10774 / NCTC 10582 / VPI-5482 / E50</strain>
    </source>
</reference>
<reference key="5">
    <citation type="journal article" date="2008" name="Structure">
        <title>Starch catabolism by a prominent human gut symbiont is directed by the recognition of amylose helices.</title>
        <authorList>
            <person name="Koropatkin N.M."/>
            <person name="Martens E.C."/>
            <person name="Gordon J.I."/>
            <person name="Smith T.J."/>
        </authorList>
    </citation>
    <scope>X-RAY CRYSTALLOGRAPHY (1.50 ANGSTROMS) OF 26-551 IN COMPLEXES WITH CALCIUM AND MALTOHEPTAOSE</scope>
    <scope>FUNCTION</scope>
    <scope>SUBUNIT</scope>
    <scope>DISRUPTION PHENOTYPE</scope>
</reference>
<gene>
    <name type="primary">susD</name>
    <name type="ordered locus">BT_3701</name>
</gene>
<accession>Q8A1G2</accession>
<accession>Q45770</accession>
<keyword id="KW-0002">3D-structure</keyword>
<keyword id="KW-0106">Calcium</keyword>
<keyword id="KW-0119">Carbohydrate metabolism</keyword>
<keyword id="KW-0998">Cell outer membrane</keyword>
<keyword id="KW-0449">Lipoprotein</keyword>
<keyword id="KW-0472">Membrane</keyword>
<keyword id="KW-0479">Metal-binding</keyword>
<keyword id="KW-0564">Palmitate</keyword>
<keyword id="KW-1185">Reference proteome</keyword>
<keyword id="KW-0732">Signal</keyword>